<evidence type="ECO:0000250" key="1"/>
<evidence type="ECO:0000255" key="2">
    <source>
        <dbReference type="PROSITE-ProRule" id="PRU00175"/>
    </source>
</evidence>
<evidence type="ECO:0000256" key="3">
    <source>
        <dbReference type="SAM" id="MobiDB-lite"/>
    </source>
</evidence>
<evidence type="ECO:0000305" key="4"/>
<name>VF193_IIV3</name>
<accession>Q197D9</accession>
<sequence length="206" mass="23536">MEESILRMHDKTTLKNMAFNRGLSRRGHNGRNASRMRKQDFIDFIMVQNHRDQSAVLGSDFLGDDMIRIFQEFIMDETFTFNPFIHLMGTIKNSTSKSPVSNQPSPEEDEPIPDLTLKPLEPCTKCECTTCMKNSIKQEENLKVHQNILNLESKIMCVVCQANVRNVVFVPCNHLATCISCSANPLMPKKCPMCRKGCKTTIKIFF</sequence>
<comment type="function">
    <text evidence="1">Plays a role early in infection by preventing host cell apoptosis.</text>
</comment>
<comment type="similarity">
    <text evidence="4">Belongs to the IIV-6 193R family.</text>
</comment>
<keyword id="KW-0053">Apoptosis</keyword>
<keyword id="KW-0244">Early protein</keyword>
<keyword id="KW-0945">Host-virus interaction</keyword>
<keyword id="KW-1085">Inhibition of host caspases by virus</keyword>
<keyword id="KW-0479">Metal-binding</keyword>
<keyword id="KW-1119">Modulation of host cell apoptosis by virus</keyword>
<keyword id="KW-1185">Reference proteome</keyword>
<keyword id="KW-0862">Zinc</keyword>
<keyword id="KW-0863">Zinc-finger</keyword>
<organismHost>
    <name type="scientific">Aedes vexans</name>
    <name type="common">Inland floodwater mosquito</name>
    <name type="synonym">Culex vexans</name>
    <dbReference type="NCBI Taxonomy" id="7163"/>
</organismHost>
<organismHost>
    <name type="scientific">Culex territans</name>
    <dbReference type="NCBI Taxonomy" id="42431"/>
</organismHost>
<organismHost>
    <name type="scientific">Culiseta annulata</name>
    <dbReference type="NCBI Taxonomy" id="332058"/>
</organismHost>
<organismHost>
    <name type="scientific">Ochlerotatus sollicitans</name>
    <name type="common">eastern saltmarsh mosquito</name>
    <dbReference type="NCBI Taxonomy" id="310513"/>
</organismHost>
<organismHost>
    <name type="scientific">Ochlerotatus taeniorhynchus</name>
    <name type="common">Black salt marsh mosquito</name>
    <name type="synonym">Aedes taeniorhynchus</name>
    <dbReference type="NCBI Taxonomy" id="329105"/>
</organismHost>
<organismHost>
    <name type="scientific">Psorophora ferox</name>
    <dbReference type="NCBI Taxonomy" id="7183"/>
</organismHost>
<protein>
    <recommendedName>
        <fullName>Putative apoptosis inhibitor 021L</fullName>
    </recommendedName>
</protein>
<reference key="1">
    <citation type="journal article" date="2006" name="J. Virol.">
        <title>Genome of invertebrate iridescent virus type 3 (mosquito iridescent virus).</title>
        <authorList>
            <person name="Delhon G."/>
            <person name="Tulman E.R."/>
            <person name="Afonso C.L."/>
            <person name="Lu Z."/>
            <person name="Becnel J.J."/>
            <person name="Moser B.A."/>
            <person name="Kutish G.F."/>
            <person name="Rock D.L."/>
        </authorList>
    </citation>
    <scope>NUCLEOTIDE SEQUENCE [LARGE SCALE GENOMIC DNA]</scope>
</reference>
<feature type="chain" id="PRO_0000377904" description="Putative apoptosis inhibitor 021L">
    <location>
        <begin position="1"/>
        <end position="206"/>
    </location>
</feature>
<feature type="zinc finger region" description="RING-type" evidence="2">
    <location>
        <begin position="157"/>
        <end position="195"/>
    </location>
</feature>
<feature type="region of interest" description="Disordered" evidence="3">
    <location>
        <begin position="95"/>
        <end position="114"/>
    </location>
</feature>
<feature type="compositionally biased region" description="Polar residues" evidence="3">
    <location>
        <begin position="95"/>
        <end position="105"/>
    </location>
</feature>
<dbReference type="EMBL" id="DQ643392">
    <property type="protein sequence ID" value="ABF82051.1"/>
    <property type="molecule type" value="Genomic_DNA"/>
</dbReference>
<dbReference type="RefSeq" id="YP_654593.1">
    <property type="nucleotide sequence ID" value="NC_008187.1"/>
</dbReference>
<dbReference type="SMR" id="Q197D9"/>
<dbReference type="KEGG" id="vg:4156270"/>
<dbReference type="OrthoDB" id="19073at10239"/>
<dbReference type="Proteomes" id="UP000001358">
    <property type="component" value="Genome"/>
</dbReference>
<dbReference type="GO" id="GO:0004842">
    <property type="term" value="F:ubiquitin-protein transferase activity"/>
    <property type="evidence" value="ECO:0007669"/>
    <property type="project" value="TreeGrafter"/>
</dbReference>
<dbReference type="GO" id="GO:0008270">
    <property type="term" value="F:zinc ion binding"/>
    <property type="evidence" value="ECO:0007669"/>
    <property type="project" value="UniProtKB-KW"/>
</dbReference>
<dbReference type="GO" id="GO:0016567">
    <property type="term" value="P:protein ubiquitination"/>
    <property type="evidence" value="ECO:0007669"/>
    <property type="project" value="TreeGrafter"/>
</dbReference>
<dbReference type="GO" id="GO:0033668">
    <property type="term" value="P:symbiont-mediated suppression of host apoptosis"/>
    <property type="evidence" value="ECO:0007669"/>
    <property type="project" value="UniProtKB-KW"/>
</dbReference>
<dbReference type="Gene3D" id="3.30.40.10">
    <property type="entry name" value="Zinc/RING finger domain, C3HC4 (zinc finger)"/>
    <property type="match status" value="1"/>
</dbReference>
<dbReference type="InterPro" id="IPR051652">
    <property type="entry name" value="MDM2_MDM4_MUL1"/>
</dbReference>
<dbReference type="InterPro" id="IPR001841">
    <property type="entry name" value="Znf_RING"/>
</dbReference>
<dbReference type="InterPro" id="IPR013083">
    <property type="entry name" value="Znf_RING/FYVE/PHD"/>
</dbReference>
<dbReference type="PANTHER" id="PTHR12183:SF32">
    <property type="entry name" value="MITOCHONDRIAL E3 UBIQUITIN PROTEIN LIGASE 1"/>
    <property type="match status" value="1"/>
</dbReference>
<dbReference type="PANTHER" id="PTHR12183">
    <property type="entry name" value="MITOCHONDRIAL UBIQUITIN LIGASE ACTIVATOR OF NFKB 1"/>
    <property type="match status" value="1"/>
</dbReference>
<dbReference type="Pfam" id="PF13920">
    <property type="entry name" value="zf-C3HC4_3"/>
    <property type="match status" value="1"/>
</dbReference>
<dbReference type="SUPFAM" id="SSF57850">
    <property type="entry name" value="RING/U-box"/>
    <property type="match status" value="1"/>
</dbReference>
<dbReference type="PROSITE" id="PS50089">
    <property type="entry name" value="ZF_RING_2"/>
    <property type="match status" value="1"/>
</dbReference>
<gene>
    <name type="ORF">IIV3-021L</name>
</gene>
<proteinExistence type="inferred from homology"/>
<organism>
    <name type="scientific">Invertebrate iridescent virus 3</name>
    <name type="common">IIV-3</name>
    <name type="synonym">Mosquito iridescent virus</name>
    <dbReference type="NCBI Taxonomy" id="345201"/>
    <lineage>
        <taxon>Viruses</taxon>
        <taxon>Varidnaviria</taxon>
        <taxon>Bamfordvirae</taxon>
        <taxon>Nucleocytoviricota</taxon>
        <taxon>Megaviricetes</taxon>
        <taxon>Pimascovirales</taxon>
        <taxon>Iridoviridae</taxon>
        <taxon>Betairidovirinae</taxon>
        <taxon>Chloriridovirus</taxon>
    </lineage>
</organism>